<proteinExistence type="inferred from homology"/>
<accession>Q0B677</accession>
<protein>
    <recommendedName>
        <fullName evidence="1">Enoyl-[acyl-carrier-protein] reductase [NADH]</fullName>
        <shortName evidence="1">ENR</shortName>
        <ecNumber evidence="1">1.3.1.9</ecNumber>
    </recommendedName>
</protein>
<name>FABV_BURCM</name>
<dbReference type="EC" id="1.3.1.9" evidence="1"/>
<dbReference type="EMBL" id="CP000441">
    <property type="protein sequence ID" value="ABI90346.1"/>
    <property type="molecule type" value="Genomic_DNA"/>
</dbReference>
<dbReference type="RefSeq" id="WP_011659744.1">
    <property type="nucleotide sequence ID" value="NZ_CP009799.1"/>
</dbReference>
<dbReference type="SMR" id="Q0B677"/>
<dbReference type="GeneID" id="93087747"/>
<dbReference type="KEGG" id="bam:Bamb_4797"/>
<dbReference type="PATRIC" id="fig|339670.21.peg.5157"/>
<dbReference type="eggNOG" id="COG3007">
    <property type="taxonomic scope" value="Bacteria"/>
</dbReference>
<dbReference type="UniPathway" id="UPA00094"/>
<dbReference type="Proteomes" id="UP000000662">
    <property type="component" value="Chromosome 2"/>
</dbReference>
<dbReference type="GO" id="GO:0004318">
    <property type="term" value="F:enoyl-[acyl-carrier-protein] reductase (NADH) activity"/>
    <property type="evidence" value="ECO:0007669"/>
    <property type="project" value="UniProtKB-UniRule"/>
</dbReference>
<dbReference type="GO" id="GO:0051287">
    <property type="term" value="F:NAD binding"/>
    <property type="evidence" value="ECO:0007669"/>
    <property type="project" value="UniProtKB-UniRule"/>
</dbReference>
<dbReference type="GO" id="GO:0050343">
    <property type="term" value="F:trans-2-enoyl-CoA reductase (NADH) activity"/>
    <property type="evidence" value="ECO:0007669"/>
    <property type="project" value="TreeGrafter"/>
</dbReference>
<dbReference type="GO" id="GO:0006633">
    <property type="term" value="P:fatty acid biosynthetic process"/>
    <property type="evidence" value="ECO:0007669"/>
    <property type="project" value="UniProtKB-UniRule"/>
</dbReference>
<dbReference type="FunFam" id="3.40.50.720:FF:000221">
    <property type="entry name" value="Enoyl-[acyl-carrier-protein] reductase [NADH]"/>
    <property type="match status" value="1"/>
</dbReference>
<dbReference type="Gene3D" id="3.40.50.720">
    <property type="entry name" value="NAD(P)-binding Rossmann-like Domain"/>
    <property type="match status" value="1"/>
</dbReference>
<dbReference type="HAMAP" id="MF_01838">
    <property type="entry name" value="FabV_reductase"/>
    <property type="match status" value="1"/>
</dbReference>
<dbReference type="InterPro" id="IPR024906">
    <property type="entry name" value="Eno_Rdtase_FAD-bd_dom"/>
</dbReference>
<dbReference type="InterPro" id="IPR024910">
    <property type="entry name" value="Enoyl-CoA_Rdtase_cat_dom"/>
</dbReference>
<dbReference type="InterPro" id="IPR050048">
    <property type="entry name" value="FabV-like_NADH_b"/>
</dbReference>
<dbReference type="InterPro" id="IPR010758">
    <property type="entry name" value="Trans-2-enoyl-CoA_reductase"/>
</dbReference>
<dbReference type="NCBIfam" id="NF043048">
    <property type="entry name" value="EnoyACPredFabV"/>
    <property type="match status" value="1"/>
</dbReference>
<dbReference type="NCBIfam" id="NF010177">
    <property type="entry name" value="PRK13656.1"/>
    <property type="match status" value="1"/>
</dbReference>
<dbReference type="PANTHER" id="PTHR37480">
    <property type="entry name" value="ENOYL-[ACYL-CARRIER-PROTEIN] REDUCTASE [NADH]"/>
    <property type="match status" value="1"/>
</dbReference>
<dbReference type="PANTHER" id="PTHR37480:SF1">
    <property type="entry name" value="ENOYL-[ACYL-CARRIER-PROTEIN] REDUCTASE [NADH]"/>
    <property type="match status" value="1"/>
</dbReference>
<dbReference type="Pfam" id="PF07055">
    <property type="entry name" value="Eno-Rase_FAD_bd"/>
    <property type="match status" value="1"/>
</dbReference>
<dbReference type="Pfam" id="PF12242">
    <property type="entry name" value="Eno-Rase_NADH_b"/>
    <property type="match status" value="1"/>
</dbReference>
<dbReference type="Pfam" id="PF12241">
    <property type="entry name" value="Enoyl_reductase"/>
    <property type="match status" value="1"/>
</dbReference>
<reference key="1">
    <citation type="submission" date="2006-08" db="EMBL/GenBank/DDBJ databases">
        <title>Complete sequence of chromosome 2 of Burkholderia cepacia AMMD.</title>
        <authorList>
            <person name="Copeland A."/>
            <person name="Lucas S."/>
            <person name="Lapidus A."/>
            <person name="Barry K."/>
            <person name="Detter J.C."/>
            <person name="Glavina del Rio T."/>
            <person name="Hammon N."/>
            <person name="Israni S."/>
            <person name="Pitluck S."/>
            <person name="Bruce D."/>
            <person name="Chain P."/>
            <person name="Malfatti S."/>
            <person name="Shin M."/>
            <person name="Vergez L."/>
            <person name="Schmutz J."/>
            <person name="Larimer F."/>
            <person name="Land M."/>
            <person name="Hauser L."/>
            <person name="Kyrpides N."/>
            <person name="Kim E."/>
            <person name="Parke J."/>
            <person name="Coenye T."/>
            <person name="Konstantinidis K."/>
            <person name="Ramette A."/>
            <person name="Tiedje J."/>
            <person name="Richardson P."/>
        </authorList>
    </citation>
    <scope>NUCLEOTIDE SEQUENCE [LARGE SCALE GENOMIC DNA]</scope>
    <source>
        <strain>ATCC BAA-244 / DSM 16087 / CCUG 44356 / LMG 19182 / AMMD</strain>
    </source>
</reference>
<organism>
    <name type="scientific">Burkholderia ambifaria (strain ATCC BAA-244 / DSM 16087 / CCUG 44356 / LMG 19182 / AMMD)</name>
    <name type="common">Burkholderia cepacia (strain AMMD)</name>
    <dbReference type="NCBI Taxonomy" id="339670"/>
    <lineage>
        <taxon>Bacteria</taxon>
        <taxon>Pseudomonadati</taxon>
        <taxon>Pseudomonadota</taxon>
        <taxon>Betaproteobacteria</taxon>
        <taxon>Burkholderiales</taxon>
        <taxon>Burkholderiaceae</taxon>
        <taxon>Burkholderia</taxon>
        <taxon>Burkholderia cepacia complex</taxon>
    </lineage>
</organism>
<feature type="chain" id="PRO_1000070468" description="Enoyl-[acyl-carrier-protein] reductase [NADH]">
    <location>
        <begin position="1"/>
        <end position="400"/>
    </location>
</feature>
<feature type="active site" description="Proton donor" evidence="1">
    <location>
        <position position="235"/>
    </location>
</feature>
<feature type="binding site" evidence="1">
    <location>
        <begin position="48"/>
        <end position="53"/>
    </location>
    <ligand>
        <name>NAD(+)</name>
        <dbReference type="ChEBI" id="CHEBI:57540"/>
    </ligand>
</feature>
<feature type="binding site" evidence="1">
    <location>
        <begin position="74"/>
        <end position="75"/>
    </location>
    <ligand>
        <name>NAD(+)</name>
        <dbReference type="ChEBI" id="CHEBI:57540"/>
    </ligand>
</feature>
<feature type="binding site" evidence="1">
    <location>
        <begin position="111"/>
        <end position="112"/>
    </location>
    <ligand>
        <name>NAD(+)</name>
        <dbReference type="ChEBI" id="CHEBI:57540"/>
    </ligand>
</feature>
<feature type="binding site" evidence="1">
    <location>
        <begin position="139"/>
        <end position="140"/>
    </location>
    <ligand>
        <name>NAD(+)</name>
        <dbReference type="ChEBI" id="CHEBI:57540"/>
    </ligand>
</feature>
<feature type="binding site" evidence="1">
    <location>
        <position position="225"/>
    </location>
    <ligand>
        <name>substrate</name>
    </ligand>
</feature>
<feature type="binding site" evidence="1">
    <location>
        <position position="244"/>
    </location>
    <ligand>
        <name>NAD(+)</name>
        <dbReference type="ChEBI" id="CHEBI:57540"/>
    </ligand>
</feature>
<feature type="binding site" evidence="1">
    <location>
        <begin position="273"/>
        <end position="275"/>
    </location>
    <ligand>
        <name>NAD(+)</name>
        <dbReference type="ChEBI" id="CHEBI:57540"/>
    </ligand>
</feature>
<feature type="site" description="Plays an important role in discriminating NADH against NADPH" evidence="1">
    <location>
        <position position="75"/>
    </location>
</feature>
<evidence type="ECO:0000255" key="1">
    <source>
        <dbReference type="HAMAP-Rule" id="MF_01838"/>
    </source>
</evidence>
<comment type="function">
    <text evidence="1">Involved in the final reduction of the elongation cycle of fatty acid synthesis (FAS II). Catalyzes the reduction of a carbon-carbon double bond in an enoyl moiety that is covalently linked to an acyl carrier protein (ACP).</text>
</comment>
<comment type="catalytic activity">
    <reaction evidence="1">
        <text>a 2,3-saturated acyl-[ACP] + NAD(+) = a (2E)-enoyl-[ACP] + NADH + H(+)</text>
        <dbReference type="Rhea" id="RHEA:10240"/>
        <dbReference type="Rhea" id="RHEA-COMP:9925"/>
        <dbReference type="Rhea" id="RHEA-COMP:9926"/>
        <dbReference type="ChEBI" id="CHEBI:15378"/>
        <dbReference type="ChEBI" id="CHEBI:57540"/>
        <dbReference type="ChEBI" id="CHEBI:57945"/>
        <dbReference type="ChEBI" id="CHEBI:78784"/>
        <dbReference type="ChEBI" id="CHEBI:78785"/>
        <dbReference type="EC" id="1.3.1.9"/>
    </reaction>
</comment>
<comment type="pathway">
    <text evidence="1">Lipid metabolism; fatty acid biosynthesis.</text>
</comment>
<comment type="subunit">
    <text evidence="1">Monomer.</text>
</comment>
<comment type="similarity">
    <text evidence="1">Belongs to the TER reductase family.</text>
</comment>
<gene>
    <name evidence="1" type="primary">fabV</name>
    <name type="ordered locus">Bamb_4797</name>
</gene>
<sequence>MIIKPRVRGFICVTTHPVGCEANVKEQIDYVTSHGPIANGPKKVLVIGASTGYGLAARISAAFGSGADTLGVFFERAGSETKPGTAGWYNSAAFEKFAAEKGLYARSINGDAFSDKVKQVTIDTIKQDLGKVDLVVYSLAAPRRTHPKTGETISSTLKPVGKAVTFRGLDTDKEVIREVSLEPATQEEIDGTVAVMGGEDWQMWIDALDEAGVLADGAKTTAFTYLGEQITHDIYWNGSIGEAKKDLDKKVLSIRDKLAAHGGDARVSVLKAVVTQASSAIPMMPLYLSLLFKVMKEQGTHEGCIEQVYGLLKDSLYGATPHVDEEGRLRADYKELDPQVQGKVVAMWDKVTNENLYEMTDFAGYKTEFLRLFGFEIAGVDYDADVNPDVKIPGIIDTTV</sequence>
<keyword id="KW-0275">Fatty acid biosynthesis</keyword>
<keyword id="KW-0276">Fatty acid metabolism</keyword>
<keyword id="KW-0444">Lipid biosynthesis</keyword>
<keyword id="KW-0443">Lipid metabolism</keyword>
<keyword id="KW-0520">NAD</keyword>
<keyword id="KW-0560">Oxidoreductase</keyword>